<keyword id="KW-0413">Isomerase</keyword>
<keyword id="KW-0456">Lyase</keyword>
<keyword id="KW-0460">Magnesium</keyword>
<keyword id="KW-0474">Menaquinone biosynthesis</keyword>
<keyword id="KW-0479">Metal-binding</keyword>
<dbReference type="EC" id="4.2.1.113" evidence="2"/>
<dbReference type="EC" id="5.1.1.-" evidence="3 4"/>
<dbReference type="EMBL" id="EU427322">
    <property type="protein sequence ID" value="ABZ81711.1"/>
    <property type="molecule type" value="Genomic_DNA"/>
</dbReference>
<dbReference type="SMR" id="B1A612"/>
<dbReference type="UniPathway" id="UPA00079"/>
<dbReference type="UniPathway" id="UPA01057">
    <property type="reaction ID" value="UER00165"/>
</dbReference>
<dbReference type="GO" id="GO:0016853">
    <property type="term" value="F:isomerase activity"/>
    <property type="evidence" value="ECO:0007669"/>
    <property type="project" value="UniProtKB-KW"/>
</dbReference>
<dbReference type="GO" id="GO:0000287">
    <property type="term" value="F:magnesium ion binding"/>
    <property type="evidence" value="ECO:0007669"/>
    <property type="project" value="UniProtKB-UniRule"/>
</dbReference>
<dbReference type="GO" id="GO:0043748">
    <property type="term" value="F:O-succinylbenzoate synthase activity"/>
    <property type="evidence" value="ECO:0007669"/>
    <property type="project" value="UniProtKB-EC"/>
</dbReference>
<dbReference type="GO" id="GO:0009234">
    <property type="term" value="P:menaquinone biosynthetic process"/>
    <property type="evidence" value="ECO:0007669"/>
    <property type="project" value="UniProtKB-UniRule"/>
</dbReference>
<dbReference type="CDD" id="cd03317">
    <property type="entry name" value="NAAAR"/>
    <property type="match status" value="1"/>
</dbReference>
<dbReference type="Gene3D" id="3.20.20.120">
    <property type="entry name" value="Enolase-like C-terminal domain"/>
    <property type="match status" value="1"/>
</dbReference>
<dbReference type="Gene3D" id="3.30.390.10">
    <property type="entry name" value="Enolase-like, N-terminal domain"/>
    <property type="match status" value="1"/>
</dbReference>
<dbReference type="HAMAP" id="MF_01933">
    <property type="entry name" value="MenC_2"/>
    <property type="match status" value="1"/>
</dbReference>
<dbReference type="InterPro" id="IPR036849">
    <property type="entry name" value="Enolase-like_C_sf"/>
</dbReference>
<dbReference type="InterPro" id="IPR029017">
    <property type="entry name" value="Enolase-like_N"/>
</dbReference>
<dbReference type="InterPro" id="IPR029065">
    <property type="entry name" value="Enolase_C-like"/>
</dbReference>
<dbReference type="InterPro" id="IPR013342">
    <property type="entry name" value="Mandelate_racemase_C"/>
</dbReference>
<dbReference type="InterPro" id="IPR013341">
    <property type="entry name" value="Mandelate_racemase_N_dom"/>
</dbReference>
<dbReference type="InterPro" id="IPR047585">
    <property type="entry name" value="MenC"/>
</dbReference>
<dbReference type="InterPro" id="IPR010197">
    <property type="entry name" value="OSBS/NAAAR"/>
</dbReference>
<dbReference type="NCBIfam" id="TIGR01928">
    <property type="entry name" value="menC_lowGC_arch"/>
    <property type="match status" value="1"/>
</dbReference>
<dbReference type="PANTHER" id="PTHR48073:SF5">
    <property type="entry name" value="O-SUCCINYLBENZOATE SYNTHASE"/>
    <property type="match status" value="1"/>
</dbReference>
<dbReference type="PANTHER" id="PTHR48073">
    <property type="entry name" value="O-SUCCINYLBENZOATE SYNTHASE-RELATED"/>
    <property type="match status" value="1"/>
</dbReference>
<dbReference type="Pfam" id="PF13378">
    <property type="entry name" value="MR_MLE_C"/>
    <property type="match status" value="1"/>
</dbReference>
<dbReference type="Pfam" id="PF02746">
    <property type="entry name" value="MR_MLE_N"/>
    <property type="match status" value="1"/>
</dbReference>
<dbReference type="SFLD" id="SFLDG00180">
    <property type="entry name" value="muconate_cycloisomerase"/>
    <property type="match status" value="1"/>
</dbReference>
<dbReference type="SFLD" id="SFLDF00116">
    <property type="entry name" value="N-succinylamino_acid_racemase"/>
    <property type="match status" value="1"/>
</dbReference>
<dbReference type="SFLD" id="SFLDF00009">
    <property type="entry name" value="o-succinylbenzoate_synthase"/>
    <property type="match status" value="1"/>
</dbReference>
<dbReference type="SMART" id="SM00922">
    <property type="entry name" value="MR_MLE"/>
    <property type="match status" value="1"/>
</dbReference>
<dbReference type="SUPFAM" id="SSF51604">
    <property type="entry name" value="Enolase C-terminal domain-like"/>
    <property type="match status" value="1"/>
</dbReference>
<dbReference type="SUPFAM" id="SSF54826">
    <property type="entry name" value="Enolase N-terminal domain-like"/>
    <property type="match status" value="1"/>
</dbReference>
<evidence type="ECO:0000250" key="1">
    <source>
        <dbReference type="UniProtKB" id="Q5L1G9"/>
    </source>
</evidence>
<evidence type="ECO:0000255" key="2">
    <source>
        <dbReference type="HAMAP-Rule" id="MF_01933"/>
    </source>
</evidence>
<evidence type="ECO:0000269" key="3">
    <source>
    </source>
</evidence>
<evidence type="ECO:0000269" key="4">
    <source ref="1"/>
</evidence>
<evidence type="ECO:0000303" key="5">
    <source ref="1"/>
</evidence>
<evidence type="ECO:0000305" key="6"/>
<reference key="1">
    <citation type="journal article" date="2009" name="Process Biochem.">
        <title>Racemization study on different N-acetylamino acids by a recombinant N-succinylamino acid racemase from Geobacillus kaustophilus CECT4264.</title>
        <authorList>
            <person name="Pozo-Dengra J."/>
            <person name="Martinez-Gomez A.I."/>
            <person name="Martinez-Rodriguez S."/>
            <person name="Clemente-Jimenez J.M."/>
            <person name="Rodriguez-Vico F."/>
            <person name="Las Heras-Vazquez F.J."/>
        </authorList>
    </citation>
    <scope>NUCLEOTIDE SEQUENCE [GENOMIC DNA]</scope>
    <scope>FUNCTION</scope>
    <scope>CATALYTIC ACTIVITY</scope>
    <scope>COFACTOR</scope>
    <scope>BIOPHYSICOCHEMICAL PROPERTIES</scope>
    <scope>SUBUNIT</scope>
    <source>
        <strain>CECT4264</strain>
    </source>
</reference>
<reference key="2">
    <citation type="journal article" date="2015" name="Mol. Biotechnol.">
        <title>Biochemical and mutational characterization of N-succinyl-amino acid racemase from Geobacillus stearothermophilus CECT49.</title>
        <authorList>
            <person name="Soriano-Maldonado P."/>
            <person name="Andujar-Sanchez M."/>
            <person name="Clemente-Jimenez J.M."/>
            <person name="Rodriguez-Vico F."/>
            <person name="Las Heras-Vazquez F.J."/>
            <person name="Martinez-Rodriguez S."/>
        </authorList>
    </citation>
    <scope>FUNCTION</scope>
    <scope>CATALYTIC ACTIVITY</scope>
    <source>
        <strain>CECT4264</strain>
    </source>
</reference>
<proteinExistence type="evidence at protein level"/>
<organism>
    <name type="scientific">Geobacillus kaustophilus</name>
    <dbReference type="NCBI Taxonomy" id="1462"/>
    <lineage>
        <taxon>Bacteria</taxon>
        <taxon>Bacillati</taxon>
        <taxon>Bacillota</taxon>
        <taxon>Bacilli</taxon>
        <taxon>Bacillales</taxon>
        <taxon>Anoxybacillaceae</taxon>
        <taxon>Geobacillus</taxon>
        <taxon>Geobacillus thermoleovorans group</taxon>
    </lineage>
</organism>
<accession>B1A612</accession>
<feature type="chain" id="PRO_0000455097" description="o-succinylbenzoate synthase">
    <location>
        <begin position="1"/>
        <end position="375"/>
    </location>
</feature>
<feature type="active site" description="Proton donor" evidence="2">
    <location>
        <position position="166"/>
    </location>
</feature>
<feature type="active site" description="Proton acceptor" evidence="2">
    <location>
        <position position="265"/>
    </location>
</feature>
<feature type="binding site" evidence="2">
    <location>
        <position position="191"/>
    </location>
    <ligand>
        <name>Mg(2+)</name>
        <dbReference type="ChEBI" id="CHEBI:18420"/>
    </ligand>
</feature>
<feature type="binding site" evidence="2">
    <location>
        <position position="216"/>
    </location>
    <ligand>
        <name>Mg(2+)</name>
        <dbReference type="ChEBI" id="CHEBI:18420"/>
    </ligand>
</feature>
<feature type="binding site" evidence="2">
    <location>
        <position position="241"/>
    </location>
    <ligand>
        <name>Mg(2+)</name>
        <dbReference type="ChEBI" id="CHEBI:18420"/>
    </ligand>
</feature>
<comment type="function">
    <text evidence="1 2 3 4">Converts 2-succinyl-6-hydroxy-2,4-cyclohexadiene-1-carboxylate (SHCHC) to 2-succinylbenzoate (OSB) (By similarity). Also acts as a N-succinylamino acid racemase (NSAR) that catalyzes the racemization of various N-succinylamino acids, including N-succinyl-alanine and N-succinyl-phenylalanine (Ref.1). Can catalyze the racemization of a broad range of N-acylamino acids, including N-acetyl-methionine, N-acetyl-phenylalanine, N-carbamoyl-methionine, N-formyl-D-methionine, N-formyl-D-norleucine and N-carbamoyl-D-norleucine (PubMed:25875730, Ref.1). May be a bifunctional enzyme involved in menaquinone biosynthesis and in an irreversible pathway for the conversion of D- to L-amino acids, thereby facilitating the survival and/or growth of the organism (By similarity).</text>
</comment>
<comment type="catalytic activity">
    <reaction evidence="2">
        <text>(1R,6R)-6-hydroxy-2-succinyl-cyclohexa-2,4-diene-1-carboxylate = 2-succinylbenzoate + H2O</text>
        <dbReference type="Rhea" id="RHEA:10196"/>
        <dbReference type="ChEBI" id="CHEBI:15377"/>
        <dbReference type="ChEBI" id="CHEBI:18325"/>
        <dbReference type="ChEBI" id="CHEBI:58689"/>
        <dbReference type="EC" id="4.2.1.113"/>
    </reaction>
</comment>
<comment type="catalytic activity">
    <reaction evidence="3 4">
        <text>N-acetyl-D-methionine = N-acetyl-L-methionine</text>
        <dbReference type="Rhea" id="RHEA:59960"/>
        <dbReference type="ChEBI" id="CHEBI:71670"/>
        <dbReference type="ChEBI" id="CHEBI:85220"/>
    </reaction>
</comment>
<comment type="catalytic activity">
    <reaction evidence="4">
        <text>N-acetyl-D-phenylalanine = N-acetyl-L-phenylalanine</text>
        <dbReference type="Rhea" id="RHEA:62772"/>
        <dbReference type="ChEBI" id="CHEBI:57702"/>
        <dbReference type="ChEBI" id="CHEBI:143878"/>
    </reaction>
</comment>
<comment type="cofactor">
    <cofactor evidence="2 4">
        <name>a divalent metal cation</name>
        <dbReference type="ChEBI" id="CHEBI:60240"/>
    </cofactor>
    <text evidence="4">Shows highest activity in vitro with Co(2+), Mn(2+) and Ni(2+).</text>
</comment>
<comment type="biophysicochemical properties">
    <kinetics>
        <KM evidence="4">0.12 mM for N-succinyl-L-alanine</KM>
        <KM evidence="4">0.13 mM for N-succinyl-D-alanine</KM>
        <KM evidence="4">0.13 mM for N-succinyl-L-phenylalanine</KM>
        <KM evidence="4">0.04 mM for N-succinyl-D-phenylalanine</KM>
        <KM evidence="4">8 mM for N-acetyl-L-methionine</KM>
        <KM evidence="4">7 mM for N-acetyl-D-methionine</KM>
        <KM evidence="4">43 mM for N-acetyl-L-phenylalanine</KM>
        <KM evidence="4">23 mM for N-acetyl-D-phenylalanine</KM>
        <KM evidence="4">5 mM for N-carbamoyl-L-methionine</KM>
        <KM evidence="4">2 mM for N-carbamoyl-D-methionine</KM>
        <text evidence="4">kcat is 43 sec(-1) with N-succinyl-L-alanine as substrate. kcat is 15 sec(-1) with N-succinyl-D-alanine as substrate. kcat is 5 sec(-1) with N-succinyl-L-phenylalanine as substrate. kcat is 2 sec(-1) with N-succinyl-D-phenylalanine as substrate. kcat is 22 sec(-1) with N-acetyl-L-methionine as substrate. kcat is 20 sec(-1) with N-acetyl-D-methionine as substrate. kcat is 16 sec(-1) with N-acetyl-L-phenylalanine as substrate. kcat is 10 sec(-1) with N-acetyl-D-phenylalanine as substrate. kcat is 2 sec(-1) with N-carbamoyl-L-methionine as substrate. kcat is 2 sec(-1) with N-carbamoyl-D-methionine as substrate.</text>
    </kinetics>
    <phDependence>
        <text evidence="4">Optimum pH is 8.0.</text>
    </phDependence>
    <temperatureDependence>
        <text evidence="4">Optimum temperature is 55 degrees Celsius.</text>
    </temperatureDependence>
</comment>
<comment type="pathway">
    <text evidence="2">Quinol/quinone metabolism; 1,4-dihydroxy-2-naphthoate biosynthesis; 1,4-dihydroxy-2-naphthoate from chorismate: step 4/7.</text>
</comment>
<comment type="pathway">
    <text evidence="2">Quinol/quinone metabolism; menaquinone biosynthesis.</text>
</comment>
<comment type="subunit">
    <text evidence="4">Homotetramer.</text>
</comment>
<comment type="similarity">
    <text evidence="2">Belongs to the mandelate racemase/muconate lactonizing enzyme family. MenC type 2 subfamily.</text>
</comment>
<gene>
    <name evidence="2" type="primary">menC</name>
    <name evidence="5" type="synonym">nsaar</name>
</gene>
<name>MENC_GEOKU</name>
<sequence>MAINIEYVILRHLQMELKAPFTTSFGTFQTKEFILVEVVDCDGVSGWGESVAFSVPWYSEETVKTNWHMLEEFLVPLLFSKPLRHPAELPERFAAIRQNNMAKAALEGAVWDLYAKRLGVPLCQALGGTKKEIEVGVSIGIQPTVDDLLQVIERYVAQGYRRIKVKIKPGWDVDVIRDVRRAFPDVPLMADANSAYTLADAKRLQALDEFGLMMIEQPLAADDLVDHARLQPLLKTPICLDESIRSYDDARKALDLGSCRIINIKIGRVGGLWEAKRIHDLCAERGVPVWCGGMLEAGVGRAHNIAITTLENFALPGDTAASSHYWERDIITPEVEVHNGLIRVPNAPGIGYDVDRRQVERYTQFAKLFHRTATA</sequence>
<protein>
    <recommendedName>
        <fullName evidence="2">o-succinylbenzoate synthase</fullName>
        <shortName evidence="2">OSB synthase</shortName>
        <shortName evidence="2">OSBS</shortName>
        <ecNumber evidence="2">4.2.1.113</ecNumber>
    </recommendedName>
    <alternativeName>
        <fullName evidence="2">4-(2'-carboxyphenyl)-4-oxybutyric acid synthase</fullName>
    </alternativeName>
    <alternativeName>
        <fullName evidence="5">N-acylamino acid racemase</fullName>
        <shortName evidence="5">NAAAR</shortName>
    </alternativeName>
    <alternativeName>
        <fullName evidence="5">N-succinylamino acid racemase</fullName>
        <shortName evidence="5">NSAAR</shortName>
        <shortName evidence="6">NSAR</shortName>
        <ecNumber evidence="3 4">5.1.1.-</ecNumber>
    </alternativeName>
    <alternativeName>
        <fullName evidence="2">o-succinylbenzoic acid synthase</fullName>
    </alternativeName>
</protein>